<dbReference type="EMBL" id="AK315399">
    <property type="protein sequence ID" value="BAG37792.1"/>
    <property type="molecule type" value="mRNA"/>
</dbReference>
<dbReference type="EMBL" id="CH471076">
    <property type="protein sequence ID" value="EAW74623.1"/>
    <property type="molecule type" value="Genomic_DNA"/>
</dbReference>
<dbReference type="EMBL" id="BC006449">
    <property type="protein sequence ID" value="AAH06449.1"/>
    <property type="molecule type" value="mRNA"/>
</dbReference>
<dbReference type="CCDS" id="CCDS8164.1"/>
<dbReference type="RefSeq" id="NP_001018080.1">
    <property type="nucleotide sequence ID" value="NM_001018070.3"/>
</dbReference>
<dbReference type="RefSeq" id="NP_065174.1">
    <property type="nucleotide sequence ID" value="NM_020441.3"/>
</dbReference>
<dbReference type="SMR" id="Q9BR76"/>
<dbReference type="BioGRID" id="121425">
    <property type="interactions" value="205"/>
</dbReference>
<dbReference type="CORUM" id="Q9BR76"/>
<dbReference type="DIP" id="DIP-33176N"/>
<dbReference type="FunCoup" id="Q9BR76">
    <property type="interactions" value="837"/>
</dbReference>
<dbReference type="IntAct" id="Q9BR76">
    <property type="interactions" value="65"/>
</dbReference>
<dbReference type="MINT" id="Q9BR76"/>
<dbReference type="STRING" id="9606.ENSP00000340211"/>
<dbReference type="GlyGen" id="Q9BR76">
    <property type="glycosylation" value="3 sites, 1 O-linked glycan (2 sites)"/>
</dbReference>
<dbReference type="iPTMnet" id="Q9BR76"/>
<dbReference type="MetOSite" id="Q9BR76"/>
<dbReference type="PhosphoSitePlus" id="Q9BR76"/>
<dbReference type="SwissPalm" id="Q9BR76"/>
<dbReference type="BioMuta" id="CORO1B"/>
<dbReference type="DMDM" id="21263481"/>
<dbReference type="CPTAC" id="CPTAC-339"/>
<dbReference type="CPTAC" id="CPTAC-340"/>
<dbReference type="jPOST" id="Q9BR76"/>
<dbReference type="MassIVE" id="Q9BR76"/>
<dbReference type="PaxDb" id="9606-ENSP00000377471"/>
<dbReference type="PeptideAtlas" id="Q9BR76"/>
<dbReference type="ProteomicsDB" id="78746"/>
<dbReference type="Pumba" id="Q9BR76"/>
<dbReference type="Antibodypedia" id="4316">
    <property type="antibodies" value="239 antibodies from 29 providers"/>
</dbReference>
<dbReference type="DNASU" id="57175"/>
<dbReference type="Ensembl" id="ENST00000341356.10">
    <property type="protein sequence ID" value="ENSP00000340211.5"/>
    <property type="gene ID" value="ENSG00000172725.14"/>
</dbReference>
<dbReference type="Ensembl" id="ENST00000393893.5">
    <property type="protein sequence ID" value="ENSP00000377471.1"/>
    <property type="gene ID" value="ENSG00000172725.14"/>
</dbReference>
<dbReference type="GeneID" id="57175"/>
<dbReference type="KEGG" id="hsa:57175"/>
<dbReference type="MANE-Select" id="ENST00000341356.10">
    <property type="protein sequence ID" value="ENSP00000340211.5"/>
    <property type="RefSeq nucleotide sequence ID" value="NM_020441.3"/>
    <property type="RefSeq protein sequence ID" value="NP_065174.1"/>
</dbReference>
<dbReference type="UCSC" id="uc001olk.2">
    <property type="organism name" value="human"/>
</dbReference>
<dbReference type="AGR" id="HGNC:2253"/>
<dbReference type="CTD" id="57175"/>
<dbReference type="DisGeNET" id="57175"/>
<dbReference type="GeneCards" id="CORO1B"/>
<dbReference type="HGNC" id="HGNC:2253">
    <property type="gene designation" value="CORO1B"/>
</dbReference>
<dbReference type="HPA" id="ENSG00000172725">
    <property type="expression patterns" value="Low tissue specificity"/>
</dbReference>
<dbReference type="MIM" id="609849">
    <property type="type" value="gene"/>
</dbReference>
<dbReference type="neXtProt" id="NX_Q9BR76"/>
<dbReference type="OpenTargets" id="ENSG00000172725"/>
<dbReference type="PharmGKB" id="PA26769"/>
<dbReference type="VEuPathDB" id="HostDB:ENSG00000172725"/>
<dbReference type="eggNOG" id="KOG0303">
    <property type="taxonomic scope" value="Eukaryota"/>
</dbReference>
<dbReference type="GeneTree" id="ENSGT00940000159031"/>
<dbReference type="HOGENOM" id="CLU_026859_0_1_1"/>
<dbReference type="InParanoid" id="Q9BR76"/>
<dbReference type="OMA" id="IWSINFN"/>
<dbReference type="OrthoDB" id="1850764at2759"/>
<dbReference type="PAN-GO" id="Q9BR76">
    <property type="GO annotations" value="3 GO annotations based on evolutionary models"/>
</dbReference>
<dbReference type="PhylomeDB" id="Q9BR76"/>
<dbReference type="TreeFam" id="TF314280"/>
<dbReference type="PathwayCommons" id="Q9BR76"/>
<dbReference type="SignaLink" id="Q9BR76"/>
<dbReference type="SIGNOR" id="Q9BR76"/>
<dbReference type="BioGRID-ORCS" id="57175">
    <property type="hits" value="21 hits in 1158 CRISPR screens"/>
</dbReference>
<dbReference type="CD-CODE" id="DEE660B4">
    <property type="entry name" value="Stress granule"/>
</dbReference>
<dbReference type="CD-CODE" id="FB4E32DD">
    <property type="entry name" value="Presynaptic clusters and postsynaptic densities"/>
</dbReference>
<dbReference type="GenomeRNAi" id="57175"/>
<dbReference type="Pharos" id="Q9BR76">
    <property type="development level" value="Tbio"/>
</dbReference>
<dbReference type="PRO" id="PR:Q9BR76"/>
<dbReference type="Proteomes" id="UP000005640">
    <property type="component" value="Chromosome 11"/>
</dbReference>
<dbReference type="RNAct" id="Q9BR76">
    <property type="molecule type" value="protein"/>
</dbReference>
<dbReference type="Bgee" id="ENSG00000172725">
    <property type="expression patterns" value="Expressed in mucosa of transverse colon and 158 other cell types or tissues"/>
</dbReference>
<dbReference type="ExpressionAtlas" id="Q9BR76">
    <property type="expression patterns" value="baseline and differential"/>
</dbReference>
<dbReference type="GO" id="GO:0005884">
    <property type="term" value="C:actin filament"/>
    <property type="evidence" value="ECO:0000314"/>
    <property type="project" value="UniProtKB"/>
</dbReference>
<dbReference type="GO" id="GO:0031252">
    <property type="term" value="C:cell leading edge"/>
    <property type="evidence" value="ECO:0000314"/>
    <property type="project" value="UniProtKB"/>
</dbReference>
<dbReference type="GO" id="GO:0071944">
    <property type="term" value="C:cell periphery"/>
    <property type="evidence" value="ECO:0000314"/>
    <property type="project" value="UniProtKB"/>
</dbReference>
<dbReference type="GO" id="GO:0005737">
    <property type="term" value="C:cytoplasm"/>
    <property type="evidence" value="ECO:0000314"/>
    <property type="project" value="UniProtKB"/>
</dbReference>
<dbReference type="GO" id="GO:0005829">
    <property type="term" value="C:cytosol"/>
    <property type="evidence" value="ECO:0000314"/>
    <property type="project" value="UniProtKB"/>
</dbReference>
<dbReference type="GO" id="GO:0070062">
    <property type="term" value="C:extracellular exosome"/>
    <property type="evidence" value="ECO:0007005"/>
    <property type="project" value="UniProtKB"/>
</dbReference>
<dbReference type="GO" id="GO:0005925">
    <property type="term" value="C:focal adhesion"/>
    <property type="evidence" value="ECO:0007005"/>
    <property type="project" value="UniProtKB"/>
</dbReference>
<dbReference type="GO" id="GO:0098978">
    <property type="term" value="C:glutamatergic synapse"/>
    <property type="evidence" value="ECO:0007669"/>
    <property type="project" value="Ensembl"/>
</dbReference>
<dbReference type="GO" id="GO:0030027">
    <property type="term" value="C:lamellipodium"/>
    <property type="evidence" value="ECO:0000314"/>
    <property type="project" value="UniProtKB"/>
</dbReference>
<dbReference type="GO" id="GO:0048471">
    <property type="term" value="C:perinuclear region of cytoplasm"/>
    <property type="evidence" value="ECO:0000314"/>
    <property type="project" value="UniProtKB"/>
</dbReference>
<dbReference type="GO" id="GO:0005886">
    <property type="term" value="C:plasma membrane"/>
    <property type="evidence" value="ECO:0000314"/>
    <property type="project" value="CACAO"/>
</dbReference>
<dbReference type="GO" id="GO:0001725">
    <property type="term" value="C:stress fiber"/>
    <property type="evidence" value="ECO:0000314"/>
    <property type="project" value="UniProtKB"/>
</dbReference>
<dbReference type="GO" id="GO:0051015">
    <property type="term" value="F:actin filament binding"/>
    <property type="evidence" value="ECO:0000314"/>
    <property type="project" value="UniProtKB"/>
</dbReference>
<dbReference type="GO" id="GO:0071933">
    <property type="term" value="F:Arp2/3 complex binding"/>
    <property type="evidence" value="ECO:0000314"/>
    <property type="project" value="UniProtKB"/>
</dbReference>
<dbReference type="GO" id="GO:0045296">
    <property type="term" value="F:cadherin binding"/>
    <property type="evidence" value="ECO:0007005"/>
    <property type="project" value="BHF-UCL"/>
</dbReference>
<dbReference type="GO" id="GO:0042802">
    <property type="term" value="F:identical protein binding"/>
    <property type="evidence" value="ECO:0000314"/>
    <property type="project" value="UniProtKB"/>
</dbReference>
<dbReference type="GO" id="GO:0030036">
    <property type="term" value="P:actin cytoskeleton organization"/>
    <property type="evidence" value="ECO:0000314"/>
    <property type="project" value="CACAO"/>
</dbReference>
<dbReference type="GO" id="GO:0090135">
    <property type="term" value="P:actin filament branching"/>
    <property type="evidence" value="ECO:0000314"/>
    <property type="project" value="UniProtKB"/>
</dbReference>
<dbReference type="GO" id="GO:0051017">
    <property type="term" value="P:actin filament bundle assembly"/>
    <property type="evidence" value="ECO:0000314"/>
    <property type="project" value="UniProtKB"/>
</dbReference>
<dbReference type="GO" id="GO:0007015">
    <property type="term" value="P:actin filament organization"/>
    <property type="evidence" value="ECO:0000318"/>
    <property type="project" value="GO_Central"/>
</dbReference>
<dbReference type="GO" id="GO:0016477">
    <property type="term" value="P:cell migration"/>
    <property type="evidence" value="ECO:0000314"/>
    <property type="project" value="UniProtKB"/>
</dbReference>
<dbReference type="GO" id="GO:0036120">
    <property type="term" value="P:cellular response to platelet-derived growth factor stimulus"/>
    <property type="evidence" value="ECO:0000315"/>
    <property type="project" value="UniProtKB"/>
</dbReference>
<dbReference type="GO" id="GO:0035767">
    <property type="term" value="P:endothelial cell chemotaxis"/>
    <property type="evidence" value="ECO:0000314"/>
    <property type="project" value="UniProtKB"/>
</dbReference>
<dbReference type="GO" id="GO:0034316">
    <property type="term" value="P:negative regulation of Arp2/3 complex-mediated actin nucleation"/>
    <property type="evidence" value="ECO:0000314"/>
    <property type="project" value="UniProtKB"/>
</dbReference>
<dbReference type="GO" id="GO:0071672">
    <property type="term" value="P:negative regulation of smooth muscle cell chemotaxis"/>
    <property type="evidence" value="ECO:0000315"/>
    <property type="project" value="UniProtKB"/>
</dbReference>
<dbReference type="GO" id="GO:2000394">
    <property type="term" value="P:positive regulation of lamellipodium morphogenesis"/>
    <property type="evidence" value="ECO:0000314"/>
    <property type="project" value="UniProtKB"/>
</dbReference>
<dbReference type="GO" id="GO:1902463">
    <property type="term" value="P:protein localization to cell leading edge"/>
    <property type="evidence" value="ECO:0000314"/>
    <property type="project" value="UniProtKB"/>
</dbReference>
<dbReference type="GO" id="GO:0034315">
    <property type="term" value="P:regulation of Arp2/3 complex-mediated actin nucleation"/>
    <property type="evidence" value="ECO:0000305"/>
    <property type="project" value="UniProtKB"/>
</dbReference>
<dbReference type="GO" id="GO:0031529">
    <property type="term" value="P:ruffle organization"/>
    <property type="evidence" value="ECO:0000314"/>
    <property type="project" value="UniProtKB"/>
</dbReference>
<dbReference type="GO" id="GO:0042060">
    <property type="term" value="P:wound healing"/>
    <property type="evidence" value="ECO:0000314"/>
    <property type="project" value="UniProtKB"/>
</dbReference>
<dbReference type="FunFam" id="2.130.10.10:FF:000003">
    <property type="entry name" value="Coronin"/>
    <property type="match status" value="1"/>
</dbReference>
<dbReference type="Gene3D" id="2.130.10.10">
    <property type="entry name" value="YVTN repeat-like/Quinoprotein amine dehydrogenase"/>
    <property type="match status" value="1"/>
</dbReference>
<dbReference type="InterPro" id="IPR015505">
    <property type="entry name" value="Coronin"/>
</dbReference>
<dbReference type="InterPro" id="IPR015048">
    <property type="entry name" value="DUF1899"/>
</dbReference>
<dbReference type="InterPro" id="IPR015943">
    <property type="entry name" value="WD40/YVTN_repeat-like_dom_sf"/>
</dbReference>
<dbReference type="InterPro" id="IPR019775">
    <property type="entry name" value="WD40_repeat_CS"/>
</dbReference>
<dbReference type="InterPro" id="IPR036322">
    <property type="entry name" value="WD40_repeat_dom_sf"/>
</dbReference>
<dbReference type="InterPro" id="IPR001680">
    <property type="entry name" value="WD40_rpt"/>
</dbReference>
<dbReference type="PANTHER" id="PTHR10856">
    <property type="entry name" value="CORONIN"/>
    <property type="match status" value="1"/>
</dbReference>
<dbReference type="PANTHER" id="PTHR10856:SF24">
    <property type="entry name" value="CORONIN-1B"/>
    <property type="match status" value="1"/>
</dbReference>
<dbReference type="Pfam" id="PF08953">
    <property type="entry name" value="DUF1899"/>
    <property type="match status" value="1"/>
</dbReference>
<dbReference type="Pfam" id="PF00400">
    <property type="entry name" value="WD40"/>
    <property type="match status" value="3"/>
</dbReference>
<dbReference type="Pfam" id="PF16300">
    <property type="entry name" value="WD40_4"/>
    <property type="match status" value="1"/>
</dbReference>
<dbReference type="SMART" id="SM01166">
    <property type="entry name" value="DUF1899"/>
    <property type="match status" value="1"/>
</dbReference>
<dbReference type="SMART" id="SM01167">
    <property type="entry name" value="DUF1900"/>
    <property type="match status" value="1"/>
</dbReference>
<dbReference type="SMART" id="SM00320">
    <property type="entry name" value="WD40"/>
    <property type="match status" value="3"/>
</dbReference>
<dbReference type="SUPFAM" id="SSF50978">
    <property type="entry name" value="WD40 repeat-like"/>
    <property type="match status" value="1"/>
</dbReference>
<dbReference type="PROSITE" id="PS00678">
    <property type="entry name" value="WD_REPEATS_1"/>
    <property type="match status" value="1"/>
</dbReference>
<dbReference type="PROSITE" id="PS50082">
    <property type="entry name" value="WD_REPEATS_2"/>
    <property type="match status" value="2"/>
</dbReference>
<dbReference type="PROSITE" id="PS50294">
    <property type="entry name" value="WD_REPEATS_REGION"/>
    <property type="match status" value="1"/>
</dbReference>
<feature type="chain" id="PRO_0000050922" description="Coronin-1B">
    <location>
        <begin position="1"/>
        <end position="489"/>
    </location>
</feature>
<feature type="repeat" description="WD 1">
    <location>
        <begin position="18"/>
        <end position="72"/>
    </location>
</feature>
<feature type="repeat" description="WD 2">
    <location>
        <begin position="73"/>
        <end position="122"/>
    </location>
</feature>
<feature type="repeat" description="WD 3">
    <location>
        <begin position="123"/>
        <end position="166"/>
    </location>
</feature>
<feature type="repeat" description="WD 4">
    <location>
        <begin position="167"/>
        <end position="210"/>
    </location>
</feature>
<feature type="repeat" description="WD 5">
    <location>
        <begin position="211"/>
        <end position="256"/>
    </location>
</feature>
<feature type="repeat" description="WD 6">
    <location>
        <begin position="257"/>
        <end position="296"/>
    </location>
</feature>
<feature type="region of interest" description="Disordered" evidence="3">
    <location>
        <begin position="408"/>
        <end position="444"/>
    </location>
</feature>
<feature type="coiled-coil region" evidence="2">
    <location>
        <begin position="449"/>
        <end position="474"/>
    </location>
</feature>
<feature type="compositionally biased region" description="Low complexity" evidence="3">
    <location>
        <begin position="428"/>
        <end position="441"/>
    </location>
</feature>
<feature type="modified residue" description="Phosphoserine; by PKC" evidence="4">
    <location>
        <position position="2"/>
    </location>
</feature>
<feature type="sequence variant" id="VAR_035877" description="In a colorectal cancer sample; somatic mutation; dbSNP:rs756117196." evidence="5">
    <original>V</original>
    <variation>M</variation>
    <location>
        <position position="411"/>
    </location>
</feature>
<feature type="sequence variant" id="VAR_053389" description="In dbSNP:rs2286624.">
    <original>R</original>
    <variation>L</variation>
    <location>
        <position position="476"/>
    </location>
</feature>
<feature type="mutagenesis site" description="Stronger interaction with the Arp2/3 complex. Does not affect homo-oligomerization. Enhanced ruffling in response to phorbol 12-myristate 13-acetate (PMA) and increased speed in fibroblasts." evidence="4">
    <original>S</original>
    <variation>A</variation>
    <location>
        <position position="2"/>
    </location>
</feature>
<feature type="mutagenesis site" description="Weaker interaction with the Arp2/3 complex. Does not affect homo-oligomerization. Attenuated PMA-induced ruffling and slower speed in fibroblasts." evidence="4">
    <original>S</original>
    <variation>D</variation>
    <location>
        <position position="2"/>
    </location>
</feature>
<sequence length="489" mass="54235">MSFRKVVRQSKFRHVFGQPVKNDQCYEDIRVSRVTWDSTFCAVNPKFLAVIVEASGGGAFLVLPLSKTGRIDKAYPTVCGHTGPVLDIDWCPHNDEVIASGSEDCTVMVWQIPENGLTSPLTEPVVVLEGHTKRVGIIAWHPTARNVLLSAGCDNVVLIWNVGTAEELYRLDSLHPDLIYNVSWNHNGSLFCSACKDKSVRIIDPRRGTLVAEREKAHEGARPMRAIFLADGKVFTTGFSRMSERQLALWDPENLEEPMALQELDSSNGALLPFYDPDTSVVYVCGKGDSSIRYFEITEEPPYIHFLNTFTSKEPQRGMGSMPKRGLEVSKCEIARFYKLHERKCEPIVMTVPRKSDLFQDDLYPDTAGPEAALEAEEWVSGRDADPILISLREAYVPSKQRDLKISRRNVLSDSRPAMAPGSSHLGAPASTTTAADATPSGSLARAGEAGKLEEVMQELRALRALVKEQGDRICRLEEQLGRMENGDA</sequence>
<keyword id="KW-0009">Actin-binding</keyword>
<keyword id="KW-0175">Coiled coil</keyword>
<keyword id="KW-0963">Cytoplasm</keyword>
<keyword id="KW-0206">Cytoskeleton</keyword>
<keyword id="KW-0597">Phosphoprotein</keyword>
<keyword id="KW-1267">Proteomics identification</keyword>
<keyword id="KW-1185">Reference proteome</keyword>
<keyword id="KW-0677">Repeat</keyword>
<keyword id="KW-0853">WD repeat</keyword>
<name>COR1B_HUMAN</name>
<evidence type="ECO:0000250" key="1"/>
<evidence type="ECO:0000255" key="2"/>
<evidence type="ECO:0000256" key="3">
    <source>
        <dbReference type="SAM" id="MobiDB-lite"/>
    </source>
</evidence>
<evidence type="ECO:0000269" key="4">
    <source>
    </source>
</evidence>
<evidence type="ECO:0000269" key="5">
    <source>
    </source>
</evidence>
<evidence type="ECO:0000305" key="6"/>
<accession>Q9BR76</accession>
<accession>B2RD45</accession>
<organism>
    <name type="scientific">Homo sapiens</name>
    <name type="common">Human</name>
    <dbReference type="NCBI Taxonomy" id="9606"/>
    <lineage>
        <taxon>Eukaryota</taxon>
        <taxon>Metazoa</taxon>
        <taxon>Chordata</taxon>
        <taxon>Craniata</taxon>
        <taxon>Vertebrata</taxon>
        <taxon>Euteleostomi</taxon>
        <taxon>Mammalia</taxon>
        <taxon>Eutheria</taxon>
        <taxon>Euarchontoglires</taxon>
        <taxon>Primates</taxon>
        <taxon>Haplorrhini</taxon>
        <taxon>Catarrhini</taxon>
        <taxon>Hominidae</taxon>
        <taxon>Homo</taxon>
    </lineage>
</organism>
<protein>
    <recommendedName>
        <fullName>Coronin-1B</fullName>
    </recommendedName>
    <alternativeName>
        <fullName>Coronin-2</fullName>
    </alternativeName>
</protein>
<reference key="1">
    <citation type="journal article" date="2004" name="Nat. Genet.">
        <title>Complete sequencing and characterization of 21,243 full-length human cDNAs.</title>
        <authorList>
            <person name="Ota T."/>
            <person name="Suzuki Y."/>
            <person name="Nishikawa T."/>
            <person name="Otsuki T."/>
            <person name="Sugiyama T."/>
            <person name="Irie R."/>
            <person name="Wakamatsu A."/>
            <person name="Hayashi K."/>
            <person name="Sato H."/>
            <person name="Nagai K."/>
            <person name="Kimura K."/>
            <person name="Makita H."/>
            <person name="Sekine M."/>
            <person name="Obayashi M."/>
            <person name="Nishi T."/>
            <person name="Shibahara T."/>
            <person name="Tanaka T."/>
            <person name="Ishii S."/>
            <person name="Yamamoto J."/>
            <person name="Saito K."/>
            <person name="Kawai Y."/>
            <person name="Isono Y."/>
            <person name="Nakamura Y."/>
            <person name="Nagahari K."/>
            <person name="Murakami K."/>
            <person name="Yasuda T."/>
            <person name="Iwayanagi T."/>
            <person name="Wagatsuma M."/>
            <person name="Shiratori A."/>
            <person name="Sudo H."/>
            <person name="Hosoiri T."/>
            <person name="Kaku Y."/>
            <person name="Kodaira H."/>
            <person name="Kondo H."/>
            <person name="Sugawara M."/>
            <person name="Takahashi M."/>
            <person name="Kanda K."/>
            <person name="Yokoi T."/>
            <person name="Furuya T."/>
            <person name="Kikkawa E."/>
            <person name="Omura Y."/>
            <person name="Abe K."/>
            <person name="Kamihara K."/>
            <person name="Katsuta N."/>
            <person name="Sato K."/>
            <person name="Tanikawa M."/>
            <person name="Yamazaki M."/>
            <person name="Ninomiya K."/>
            <person name="Ishibashi T."/>
            <person name="Yamashita H."/>
            <person name="Murakawa K."/>
            <person name="Fujimori K."/>
            <person name="Tanai H."/>
            <person name="Kimata M."/>
            <person name="Watanabe M."/>
            <person name="Hiraoka S."/>
            <person name="Chiba Y."/>
            <person name="Ishida S."/>
            <person name="Ono Y."/>
            <person name="Takiguchi S."/>
            <person name="Watanabe S."/>
            <person name="Yosida M."/>
            <person name="Hotuta T."/>
            <person name="Kusano J."/>
            <person name="Kanehori K."/>
            <person name="Takahashi-Fujii A."/>
            <person name="Hara H."/>
            <person name="Tanase T.-O."/>
            <person name="Nomura Y."/>
            <person name="Togiya S."/>
            <person name="Komai F."/>
            <person name="Hara R."/>
            <person name="Takeuchi K."/>
            <person name="Arita M."/>
            <person name="Imose N."/>
            <person name="Musashino K."/>
            <person name="Yuuki H."/>
            <person name="Oshima A."/>
            <person name="Sasaki N."/>
            <person name="Aotsuka S."/>
            <person name="Yoshikawa Y."/>
            <person name="Matsunawa H."/>
            <person name="Ichihara T."/>
            <person name="Shiohata N."/>
            <person name="Sano S."/>
            <person name="Moriya S."/>
            <person name="Momiyama H."/>
            <person name="Satoh N."/>
            <person name="Takami S."/>
            <person name="Terashima Y."/>
            <person name="Suzuki O."/>
            <person name="Nakagawa S."/>
            <person name="Senoh A."/>
            <person name="Mizoguchi H."/>
            <person name="Goto Y."/>
            <person name="Shimizu F."/>
            <person name="Wakebe H."/>
            <person name="Hishigaki H."/>
            <person name="Watanabe T."/>
            <person name="Sugiyama A."/>
            <person name="Takemoto M."/>
            <person name="Kawakami B."/>
            <person name="Yamazaki M."/>
            <person name="Watanabe K."/>
            <person name="Kumagai A."/>
            <person name="Itakura S."/>
            <person name="Fukuzumi Y."/>
            <person name="Fujimori Y."/>
            <person name="Komiyama M."/>
            <person name="Tashiro H."/>
            <person name="Tanigami A."/>
            <person name="Fujiwara T."/>
            <person name="Ono T."/>
            <person name="Yamada K."/>
            <person name="Fujii Y."/>
            <person name="Ozaki K."/>
            <person name="Hirao M."/>
            <person name="Ohmori Y."/>
            <person name="Kawabata A."/>
            <person name="Hikiji T."/>
            <person name="Kobatake N."/>
            <person name="Inagaki H."/>
            <person name="Ikema Y."/>
            <person name="Okamoto S."/>
            <person name="Okitani R."/>
            <person name="Kawakami T."/>
            <person name="Noguchi S."/>
            <person name="Itoh T."/>
            <person name="Shigeta K."/>
            <person name="Senba T."/>
            <person name="Matsumura K."/>
            <person name="Nakajima Y."/>
            <person name="Mizuno T."/>
            <person name="Morinaga M."/>
            <person name="Sasaki M."/>
            <person name="Togashi T."/>
            <person name="Oyama M."/>
            <person name="Hata H."/>
            <person name="Watanabe M."/>
            <person name="Komatsu T."/>
            <person name="Mizushima-Sugano J."/>
            <person name="Satoh T."/>
            <person name="Shirai Y."/>
            <person name="Takahashi Y."/>
            <person name="Nakagawa K."/>
            <person name="Okumura K."/>
            <person name="Nagase T."/>
            <person name="Nomura N."/>
            <person name="Kikuchi H."/>
            <person name="Masuho Y."/>
            <person name="Yamashita R."/>
            <person name="Nakai K."/>
            <person name="Yada T."/>
            <person name="Nakamura Y."/>
            <person name="Ohara O."/>
            <person name="Isogai T."/>
            <person name="Sugano S."/>
        </authorList>
    </citation>
    <scope>NUCLEOTIDE SEQUENCE [LARGE SCALE MRNA]</scope>
    <source>
        <tissue>Thalamus</tissue>
    </source>
</reference>
<reference key="2">
    <citation type="submission" date="2005-07" db="EMBL/GenBank/DDBJ databases">
        <authorList>
            <person name="Mural R.J."/>
            <person name="Istrail S."/>
            <person name="Sutton G.G."/>
            <person name="Florea L."/>
            <person name="Halpern A.L."/>
            <person name="Mobarry C.M."/>
            <person name="Lippert R."/>
            <person name="Walenz B."/>
            <person name="Shatkay H."/>
            <person name="Dew I."/>
            <person name="Miller J.R."/>
            <person name="Flanigan M.J."/>
            <person name="Edwards N.J."/>
            <person name="Bolanos R."/>
            <person name="Fasulo D."/>
            <person name="Halldorsson B.V."/>
            <person name="Hannenhalli S."/>
            <person name="Turner R."/>
            <person name="Yooseph S."/>
            <person name="Lu F."/>
            <person name="Nusskern D.R."/>
            <person name="Shue B.C."/>
            <person name="Zheng X.H."/>
            <person name="Zhong F."/>
            <person name="Delcher A.L."/>
            <person name="Huson D.H."/>
            <person name="Kravitz S.A."/>
            <person name="Mouchard L."/>
            <person name="Reinert K."/>
            <person name="Remington K.A."/>
            <person name="Clark A.G."/>
            <person name="Waterman M.S."/>
            <person name="Eichler E.E."/>
            <person name="Adams M.D."/>
            <person name="Hunkapiller M.W."/>
            <person name="Myers E.W."/>
            <person name="Venter J.C."/>
        </authorList>
    </citation>
    <scope>NUCLEOTIDE SEQUENCE [LARGE SCALE GENOMIC DNA]</scope>
</reference>
<reference key="3">
    <citation type="journal article" date="2004" name="Genome Res.">
        <title>The status, quality, and expansion of the NIH full-length cDNA project: the Mammalian Gene Collection (MGC).</title>
        <authorList>
            <consortium name="The MGC Project Team"/>
        </authorList>
    </citation>
    <scope>NUCLEOTIDE SEQUENCE [LARGE SCALE MRNA]</scope>
    <source>
        <tissue>Placenta</tissue>
    </source>
</reference>
<reference key="4">
    <citation type="journal article" date="2005" name="J. Biol. Chem.">
        <title>Phosphorylation of coronin 1B by protein kinase C regulates interaction with Arp2/3 and cell motility.</title>
        <authorList>
            <person name="Cai L."/>
            <person name="Holoweckyj N."/>
            <person name="Schaller M.D."/>
            <person name="Bear J.E."/>
        </authorList>
    </citation>
    <scope>FUNCTION</scope>
    <scope>HOMOOLIGOMERIZATION</scope>
    <scope>INTERACTION WITH ACTR2; ARPC1B AND ARPC2</scope>
    <scope>SUBCELLULAR LOCATION</scope>
    <scope>PHOSPHORYLATION AT SER-2</scope>
    <scope>MUTAGENESIS OF SER-2</scope>
</reference>
<reference key="5">
    <citation type="journal article" date="2010" name="Sci. Signal.">
        <title>Quantitative phosphoproteomics reveals widespread full phosphorylation site occupancy during mitosis.</title>
        <authorList>
            <person name="Olsen J.V."/>
            <person name="Vermeulen M."/>
            <person name="Santamaria A."/>
            <person name="Kumar C."/>
            <person name="Miller M.L."/>
            <person name="Jensen L.J."/>
            <person name="Gnad F."/>
            <person name="Cox J."/>
            <person name="Jensen T.S."/>
            <person name="Nigg E.A."/>
            <person name="Brunak S."/>
            <person name="Mann M."/>
        </authorList>
    </citation>
    <scope>IDENTIFICATION BY MASS SPECTROMETRY [LARGE SCALE ANALYSIS]</scope>
    <source>
        <tissue>Cervix carcinoma</tissue>
    </source>
</reference>
<reference key="6">
    <citation type="journal article" date="2011" name="BMC Syst. Biol.">
        <title>Initial characterization of the human central proteome.</title>
        <authorList>
            <person name="Burkard T.R."/>
            <person name="Planyavsky M."/>
            <person name="Kaupe I."/>
            <person name="Breitwieser F.P."/>
            <person name="Buerckstuemmer T."/>
            <person name="Bennett K.L."/>
            <person name="Superti-Furga G."/>
            <person name="Colinge J."/>
        </authorList>
    </citation>
    <scope>IDENTIFICATION BY MASS SPECTROMETRY [LARGE SCALE ANALYSIS]</scope>
</reference>
<reference key="7">
    <citation type="journal article" date="2014" name="J. Proteomics">
        <title>An enzyme assisted RP-RPLC approach for in-depth analysis of human liver phosphoproteome.</title>
        <authorList>
            <person name="Bian Y."/>
            <person name="Song C."/>
            <person name="Cheng K."/>
            <person name="Dong M."/>
            <person name="Wang F."/>
            <person name="Huang J."/>
            <person name="Sun D."/>
            <person name="Wang L."/>
            <person name="Ye M."/>
            <person name="Zou H."/>
        </authorList>
    </citation>
    <scope>IDENTIFICATION BY MASS SPECTROMETRY [LARGE SCALE ANALYSIS]</scope>
    <source>
        <tissue>Liver</tissue>
    </source>
</reference>
<reference key="8">
    <citation type="journal article" date="2006" name="Science">
        <title>The consensus coding sequences of human breast and colorectal cancers.</title>
        <authorList>
            <person name="Sjoeblom T."/>
            <person name="Jones S."/>
            <person name="Wood L.D."/>
            <person name="Parsons D.W."/>
            <person name="Lin J."/>
            <person name="Barber T.D."/>
            <person name="Mandelker D."/>
            <person name="Leary R.J."/>
            <person name="Ptak J."/>
            <person name="Silliman N."/>
            <person name="Szabo S."/>
            <person name="Buckhaults P."/>
            <person name="Farrell C."/>
            <person name="Meeh P."/>
            <person name="Markowitz S.D."/>
            <person name="Willis J."/>
            <person name="Dawson D."/>
            <person name="Willson J.K.V."/>
            <person name="Gazdar A.F."/>
            <person name="Hartigan J."/>
            <person name="Wu L."/>
            <person name="Liu C."/>
            <person name="Parmigiani G."/>
            <person name="Park B.H."/>
            <person name="Bachman K.E."/>
            <person name="Papadopoulos N."/>
            <person name="Vogelstein B."/>
            <person name="Kinzler K.W."/>
            <person name="Velculescu V.E."/>
        </authorList>
    </citation>
    <scope>VARIANT [LARGE SCALE ANALYSIS] MET-411</scope>
</reference>
<comment type="function">
    <text evidence="1 4">Regulates leading edge dynamics and cell motility in fibroblasts. May be involved in cytokinesis and signal transduction (By similarity).</text>
</comment>
<comment type="subunit">
    <text evidence="1">Forms homooligomers, but does not form complexes with the other coronins. Interacts with Arp2/3 complex components, including ACTR2, ARPC1B and ARPC2. Binds actin (By similarity).</text>
</comment>
<comment type="interaction">
    <interactant intactId="EBI-351152">
        <id>Q9BR76</id>
    </interactant>
    <interactant intactId="EBI-352356">
        <id>O15144</id>
        <label>ARPC2</label>
    </interactant>
    <organismsDiffer>false</organismsDiffer>
    <experiments>2</experiments>
</comment>
<comment type="interaction">
    <interactant intactId="EBI-351152">
        <id>Q9BR76</id>
    </interactant>
    <interactant intactId="EBI-351384">
        <id>Q9ULV4</id>
        <label>CORO1C</label>
    </interactant>
    <organismsDiffer>false</organismsDiffer>
    <experiments>7</experiments>
</comment>
<comment type="interaction">
    <interactant intactId="EBI-351152">
        <id>Q9BR76</id>
    </interactant>
    <interactant intactId="EBI-2865388">
        <id>Q969G2</id>
        <label>LHX4</label>
    </interactant>
    <organismsDiffer>false</organismsDiffer>
    <experiments>3</experiments>
</comment>
<comment type="interaction">
    <interactant intactId="EBI-351152">
        <id>Q9BR76</id>
    </interactant>
    <interactant intactId="EBI-1222387">
        <id>Q8WYL5</id>
        <label>SSH1</label>
    </interactant>
    <organismsDiffer>false</organismsDiffer>
    <experiments>3</experiments>
</comment>
<comment type="interaction">
    <interactant intactId="EBI-351152">
        <id>Q9BR76</id>
    </interactant>
    <interactant intactId="EBI-710997">
        <id>P54274</id>
        <label>TERF1</label>
    </interactant>
    <organismsDiffer>false</organismsDiffer>
    <experiments>2</experiments>
</comment>
<comment type="subcellular location">
    <subcellularLocation>
        <location evidence="4">Cytoplasm</location>
        <location evidence="4">Cytoskeleton</location>
    </subcellularLocation>
    <subcellularLocation>
        <location evidence="4">Cytoplasm</location>
        <location evidence="4">Cytoskeleton</location>
        <location evidence="4">Stress fiber</location>
    </subcellularLocation>
    <text evidence="4">Localized to the leading edge in fibroblasts, as well as weakly along actin stress fibers.</text>
</comment>
<comment type="PTM">
    <text evidence="4">Phosphorylation by PKC on Ser-2 regulates the interaction with the Arp2/3 complex and cell motility in fibroblasts. Phosphorylation does not seem to affect subcellular location.</text>
</comment>
<comment type="similarity">
    <text evidence="6">Belongs to the WD repeat coronin family.</text>
</comment>
<proteinExistence type="evidence at protein level"/>
<gene>
    <name type="primary">CORO1B</name>
</gene>